<reference key="1">
    <citation type="submission" date="2006-08" db="EMBL/GenBank/DDBJ databases">
        <title>Complete sequence of Shewanella frigidimarina NCIMB 400.</title>
        <authorList>
            <consortium name="US DOE Joint Genome Institute"/>
            <person name="Copeland A."/>
            <person name="Lucas S."/>
            <person name="Lapidus A."/>
            <person name="Barry K."/>
            <person name="Detter J.C."/>
            <person name="Glavina del Rio T."/>
            <person name="Hammon N."/>
            <person name="Israni S."/>
            <person name="Dalin E."/>
            <person name="Tice H."/>
            <person name="Pitluck S."/>
            <person name="Fredrickson J.K."/>
            <person name="Kolker E."/>
            <person name="McCuel L.A."/>
            <person name="DiChristina T."/>
            <person name="Nealson K.H."/>
            <person name="Newman D."/>
            <person name="Tiedje J.M."/>
            <person name="Zhou J."/>
            <person name="Romine M.F."/>
            <person name="Culley D.E."/>
            <person name="Serres M."/>
            <person name="Chertkov O."/>
            <person name="Brettin T."/>
            <person name="Bruce D."/>
            <person name="Han C."/>
            <person name="Tapia R."/>
            <person name="Gilna P."/>
            <person name="Schmutz J."/>
            <person name="Larimer F."/>
            <person name="Land M."/>
            <person name="Hauser L."/>
            <person name="Kyrpides N."/>
            <person name="Mikhailova N."/>
            <person name="Richardson P."/>
        </authorList>
    </citation>
    <scope>NUCLEOTIDE SEQUENCE [LARGE SCALE GENOMIC DNA]</scope>
    <source>
        <strain>NCIMB 400</strain>
    </source>
</reference>
<name>LOLA_SHEFN</name>
<protein>
    <recommendedName>
        <fullName evidence="1">Outer-membrane lipoprotein carrier protein</fullName>
    </recommendedName>
</protein>
<evidence type="ECO:0000255" key="1">
    <source>
        <dbReference type="HAMAP-Rule" id="MF_00240"/>
    </source>
</evidence>
<accession>Q083B9</accession>
<keyword id="KW-0143">Chaperone</keyword>
<keyword id="KW-0574">Periplasm</keyword>
<keyword id="KW-0653">Protein transport</keyword>
<keyword id="KW-1185">Reference proteome</keyword>
<keyword id="KW-0732">Signal</keyword>
<keyword id="KW-0813">Transport</keyword>
<organism>
    <name type="scientific">Shewanella frigidimarina (strain NCIMB 400)</name>
    <dbReference type="NCBI Taxonomy" id="318167"/>
    <lineage>
        <taxon>Bacteria</taxon>
        <taxon>Pseudomonadati</taxon>
        <taxon>Pseudomonadota</taxon>
        <taxon>Gammaproteobacteria</taxon>
        <taxon>Alteromonadales</taxon>
        <taxon>Shewanellaceae</taxon>
        <taxon>Shewanella</taxon>
    </lineage>
</organism>
<proteinExistence type="inferred from homology"/>
<sequence>MNKRITVLSLLLATSLSSAAAMADDATELRAKLSNIDSLHATFSQQVTDINSKPIQTGSGVFALAYPNQFYWHLTQPDESLIVADGANLWIYNPFAEEVTVMDVAQAVDASPMALLVHRDEATWAKYSVTKRAVSGKSTCFDIQPKKLNSNVVAVSVCFEASQLVKFNLTDEQGNLSQFALTQQRKVKDNEANIFKFAVPDNVDIDDQRLKQAN</sequence>
<gene>
    <name evidence="1" type="primary">lolA</name>
    <name type="ordered locus">Sfri_1796</name>
</gene>
<dbReference type="EMBL" id="CP000447">
    <property type="protein sequence ID" value="ABI71646.1"/>
    <property type="molecule type" value="Genomic_DNA"/>
</dbReference>
<dbReference type="RefSeq" id="WP_011637262.1">
    <property type="nucleotide sequence ID" value="NC_008345.1"/>
</dbReference>
<dbReference type="SMR" id="Q083B9"/>
<dbReference type="STRING" id="318167.Sfri_1796"/>
<dbReference type="KEGG" id="sfr:Sfri_1796"/>
<dbReference type="eggNOG" id="COG2834">
    <property type="taxonomic scope" value="Bacteria"/>
</dbReference>
<dbReference type="HOGENOM" id="CLU_087560_1_1_6"/>
<dbReference type="OrthoDB" id="9787361at2"/>
<dbReference type="Proteomes" id="UP000000684">
    <property type="component" value="Chromosome"/>
</dbReference>
<dbReference type="GO" id="GO:0030288">
    <property type="term" value="C:outer membrane-bounded periplasmic space"/>
    <property type="evidence" value="ECO:0007669"/>
    <property type="project" value="TreeGrafter"/>
</dbReference>
<dbReference type="GO" id="GO:0044874">
    <property type="term" value="P:lipoprotein localization to outer membrane"/>
    <property type="evidence" value="ECO:0007669"/>
    <property type="project" value="UniProtKB-UniRule"/>
</dbReference>
<dbReference type="GO" id="GO:0042953">
    <property type="term" value="P:lipoprotein transport"/>
    <property type="evidence" value="ECO:0007669"/>
    <property type="project" value="InterPro"/>
</dbReference>
<dbReference type="CDD" id="cd16325">
    <property type="entry name" value="LolA"/>
    <property type="match status" value="1"/>
</dbReference>
<dbReference type="Gene3D" id="2.50.20.10">
    <property type="entry name" value="Lipoprotein localisation LolA/LolB/LppX"/>
    <property type="match status" value="1"/>
</dbReference>
<dbReference type="HAMAP" id="MF_00240">
    <property type="entry name" value="LolA"/>
    <property type="match status" value="1"/>
</dbReference>
<dbReference type="InterPro" id="IPR029046">
    <property type="entry name" value="LolA/LolB/LppX"/>
</dbReference>
<dbReference type="InterPro" id="IPR004564">
    <property type="entry name" value="OM_lipoprot_carrier_LolA-like"/>
</dbReference>
<dbReference type="InterPro" id="IPR018323">
    <property type="entry name" value="OM_lipoprot_carrier_LolA_Pbac"/>
</dbReference>
<dbReference type="NCBIfam" id="TIGR00547">
    <property type="entry name" value="lolA"/>
    <property type="match status" value="1"/>
</dbReference>
<dbReference type="PANTHER" id="PTHR35869">
    <property type="entry name" value="OUTER-MEMBRANE LIPOPROTEIN CARRIER PROTEIN"/>
    <property type="match status" value="1"/>
</dbReference>
<dbReference type="PANTHER" id="PTHR35869:SF1">
    <property type="entry name" value="OUTER-MEMBRANE LIPOPROTEIN CARRIER PROTEIN"/>
    <property type="match status" value="1"/>
</dbReference>
<dbReference type="Pfam" id="PF03548">
    <property type="entry name" value="LolA"/>
    <property type="match status" value="1"/>
</dbReference>
<dbReference type="SUPFAM" id="SSF89392">
    <property type="entry name" value="Prokaryotic lipoproteins and lipoprotein localization factors"/>
    <property type="match status" value="1"/>
</dbReference>
<feature type="signal peptide" evidence="1">
    <location>
        <begin position="1"/>
        <end position="23"/>
    </location>
</feature>
<feature type="chain" id="PRO_5000130738" description="Outer-membrane lipoprotein carrier protein">
    <location>
        <begin position="24"/>
        <end position="214"/>
    </location>
</feature>
<comment type="function">
    <text evidence="1">Participates in the translocation of lipoproteins from the inner membrane to the outer membrane. Only forms a complex with a lipoprotein if the residue after the N-terminal Cys is not an aspartate (The Asp acts as a targeting signal to indicate that the lipoprotein should stay in the inner membrane).</text>
</comment>
<comment type="subunit">
    <text evidence="1">Monomer.</text>
</comment>
<comment type="subcellular location">
    <subcellularLocation>
        <location evidence="1">Periplasm</location>
    </subcellularLocation>
</comment>
<comment type="similarity">
    <text evidence="1">Belongs to the LolA family.</text>
</comment>